<organism>
    <name type="scientific">Rhizobium etli (strain ATCC 51251 / DSM 11541 / JCM 21823 / NBRC 15573 / CFN 42)</name>
    <dbReference type="NCBI Taxonomy" id="347834"/>
    <lineage>
        <taxon>Bacteria</taxon>
        <taxon>Pseudomonadati</taxon>
        <taxon>Pseudomonadota</taxon>
        <taxon>Alphaproteobacteria</taxon>
        <taxon>Hyphomicrobiales</taxon>
        <taxon>Rhizobiaceae</taxon>
        <taxon>Rhizobium/Agrobacterium group</taxon>
        <taxon>Rhizobium</taxon>
    </lineage>
</organism>
<dbReference type="EMBL" id="CP000133">
    <property type="protein sequence ID" value="ABC89401.1"/>
    <property type="molecule type" value="Genomic_DNA"/>
</dbReference>
<dbReference type="RefSeq" id="WP_003545338.1">
    <property type="nucleotide sequence ID" value="NC_007761.1"/>
</dbReference>
<dbReference type="SMR" id="Q2KCN5"/>
<dbReference type="GeneID" id="91147032"/>
<dbReference type="KEGG" id="ret:RHE_CH00584"/>
<dbReference type="eggNOG" id="COG0361">
    <property type="taxonomic scope" value="Bacteria"/>
</dbReference>
<dbReference type="HOGENOM" id="CLU_151267_1_0_5"/>
<dbReference type="OrthoDB" id="9803250at2"/>
<dbReference type="Proteomes" id="UP000001936">
    <property type="component" value="Chromosome"/>
</dbReference>
<dbReference type="GO" id="GO:0005829">
    <property type="term" value="C:cytosol"/>
    <property type="evidence" value="ECO:0007669"/>
    <property type="project" value="TreeGrafter"/>
</dbReference>
<dbReference type="GO" id="GO:0043022">
    <property type="term" value="F:ribosome binding"/>
    <property type="evidence" value="ECO:0007669"/>
    <property type="project" value="UniProtKB-UniRule"/>
</dbReference>
<dbReference type="GO" id="GO:0019843">
    <property type="term" value="F:rRNA binding"/>
    <property type="evidence" value="ECO:0007669"/>
    <property type="project" value="UniProtKB-UniRule"/>
</dbReference>
<dbReference type="GO" id="GO:0003743">
    <property type="term" value="F:translation initiation factor activity"/>
    <property type="evidence" value="ECO:0007669"/>
    <property type="project" value="UniProtKB-UniRule"/>
</dbReference>
<dbReference type="CDD" id="cd04451">
    <property type="entry name" value="S1_IF1"/>
    <property type="match status" value="1"/>
</dbReference>
<dbReference type="FunFam" id="2.40.50.140:FF:000002">
    <property type="entry name" value="Translation initiation factor IF-1"/>
    <property type="match status" value="1"/>
</dbReference>
<dbReference type="Gene3D" id="2.40.50.140">
    <property type="entry name" value="Nucleic acid-binding proteins"/>
    <property type="match status" value="1"/>
</dbReference>
<dbReference type="HAMAP" id="MF_00075">
    <property type="entry name" value="IF_1"/>
    <property type="match status" value="1"/>
</dbReference>
<dbReference type="InterPro" id="IPR012340">
    <property type="entry name" value="NA-bd_OB-fold"/>
</dbReference>
<dbReference type="InterPro" id="IPR006196">
    <property type="entry name" value="RNA-binding_domain_S1_IF1"/>
</dbReference>
<dbReference type="InterPro" id="IPR004368">
    <property type="entry name" value="TIF_IF1"/>
</dbReference>
<dbReference type="NCBIfam" id="TIGR00008">
    <property type="entry name" value="infA"/>
    <property type="match status" value="1"/>
</dbReference>
<dbReference type="PANTHER" id="PTHR33370">
    <property type="entry name" value="TRANSLATION INITIATION FACTOR IF-1, CHLOROPLASTIC"/>
    <property type="match status" value="1"/>
</dbReference>
<dbReference type="PANTHER" id="PTHR33370:SF1">
    <property type="entry name" value="TRANSLATION INITIATION FACTOR IF-1, CHLOROPLASTIC"/>
    <property type="match status" value="1"/>
</dbReference>
<dbReference type="Pfam" id="PF01176">
    <property type="entry name" value="eIF-1a"/>
    <property type="match status" value="1"/>
</dbReference>
<dbReference type="SUPFAM" id="SSF50249">
    <property type="entry name" value="Nucleic acid-binding proteins"/>
    <property type="match status" value="1"/>
</dbReference>
<dbReference type="PROSITE" id="PS50832">
    <property type="entry name" value="S1_IF1_TYPE"/>
    <property type="match status" value="1"/>
</dbReference>
<accession>Q2KCN5</accession>
<evidence type="ECO:0000255" key="1">
    <source>
        <dbReference type="HAMAP-Rule" id="MF_00075"/>
    </source>
</evidence>
<gene>
    <name evidence="1" type="primary">infA</name>
    <name type="ordered locus">RHE_CH00584</name>
</gene>
<keyword id="KW-0963">Cytoplasm</keyword>
<keyword id="KW-0396">Initiation factor</keyword>
<keyword id="KW-0648">Protein biosynthesis</keyword>
<keyword id="KW-1185">Reference proteome</keyword>
<keyword id="KW-0694">RNA-binding</keyword>
<keyword id="KW-0699">rRNA-binding</keyword>
<name>IF1_RHIEC</name>
<comment type="function">
    <text evidence="1">One of the essential components for the initiation of protein synthesis. Stabilizes the binding of IF-2 and IF-3 on the 30S subunit to which N-formylmethionyl-tRNA(fMet) subsequently binds. Helps modulate mRNA selection, yielding the 30S pre-initiation complex (PIC). Upon addition of the 50S ribosomal subunit IF-1, IF-2 and IF-3 are released leaving the mature 70S translation initiation complex.</text>
</comment>
<comment type="subunit">
    <text evidence="1">Component of the 30S ribosomal translation pre-initiation complex which assembles on the 30S ribosome in the order IF-2 and IF-3, IF-1 and N-formylmethionyl-tRNA(fMet); mRNA recruitment can occur at any time during PIC assembly.</text>
</comment>
<comment type="subcellular location">
    <subcellularLocation>
        <location evidence="1">Cytoplasm</location>
    </subcellularLocation>
</comment>
<comment type="similarity">
    <text evidence="1">Belongs to the IF-1 family.</text>
</comment>
<reference key="1">
    <citation type="journal article" date="2006" name="Proc. Natl. Acad. Sci. U.S.A.">
        <title>The partitioned Rhizobium etli genome: genetic and metabolic redundancy in seven interacting replicons.</title>
        <authorList>
            <person name="Gonzalez V."/>
            <person name="Santamaria R.I."/>
            <person name="Bustos P."/>
            <person name="Hernandez-Gonzalez I."/>
            <person name="Medrano-Soto A."/>
            <person name="Moreno-Hagelsieb G."/>
            <person name="Janga S.C."/>
            <person name="Ramirez M.A."/>
            <person name="Jimenez-Jacinto V."/>
            <person name="Collado-Vides J."/>
            <person name="Davila G."/>
        </authorList>
    </citation>
    <scope>NUCLEOTIDE SEQUENCE [LARGE SCALE GENOMIC DNA]</scope>
    <source>
        <strain>ATCC 51251 / DSM 11541 / JCM 21823 / NBRC 15573 / CFN 42</strain>
    </source>
</reference>
<sequence length="72" mass="8382">MPKEEVLEFPGIVTELLPNATFRVKLENEHEIIAHTAGRMRKNRIRVLAGDKVLVEMTPYDLTKGRITYRFK</sequence>
<proteinExistence type="inferred from homology"/>
<protein>
    <recommendedName>
        <fullName evidence="1">Translation initiation factor IF-1</fullName>
    </recommendedName>
</protein>
<feature type="chain" id="PRO_0000263852" description="Translation initiation factor IF-1">
    <location>
        <begin position="1"/>
        <end position="72"/>
    </location>
</feature>
<feature type="domain" description="S1-like" evidence="1">
    <location>
        <begin position="1"/>
        <end position="72"/>
    </location>
</feature>